<name>FLIJ_CAUVN</name>
<comment type="function">
    <text evidence="1">Flagellar protein that affects chemotactic events.</text>
</comment>
<comment type="subcellular location">
    <subcellularLocation>
        <location evidence="1">Cell membrane</location>
        <topology evidence="1">Peripheral membrane protein</topology>
        <orientation evidence="1">Cytoplasmic side</orientation>
    </subcellularLocation>
</comment>
<comment type="similarity">
    <text evidence="2">Belongs to the FliJ family.</text>
</comment>
<dbReference type="EMBL" id="U93180">
    <property type="protein sequence ID" value="AAC45617.1"/>
    <property type="molecule type" value="Genomic_DNA"/>
</dbReference>
<dbReference type="EMBL" id="CP001340">
    <property type="protein sequence ID" value="ACL96601.1"/>
    <property type="molecule type" value="Genomic_DNA"/>
</dbReference>
<dbReference type="RefSeq" id="WP_010920877.1">
    <property type="nucleotide sequence ID" value="NC_011916.1"/>
</dbReference>
<dbReference type="RefSeq" id="YP_002518509.1">
    <property type="nucleotide sequence ID" value="NC_011916.1"/>
</dbReference>
<dbReference type="SMR" id="B8H364"/>
<dbReference type="GeneID" id="7330974"/>
<dbReference type="KEGG" id="ccs:CCNA_03136"/>
<dbReference type="PATRIC" id="fig|565050.3.peg.3062"/>
<dbReference type="HOGENOM" id="CLU_1841518_0_0_5"/>
<dbReference type="OrthoDB" id="7172697at2"/>
<dbReference type="PhylomeDB" id="B8H364"/>
<dbReference type="PRO" id="PR:B8H364"/>
<dbReference type="Proteomes" id="UP000001364">
    <property type="component" value="Chromosome"/>
</dbReference>
<dbReference type="GO" id="GO:0005886">
    <property type="term" value="C:plasma membrane"/>
    <property type="evidence" value="ECO:0007669"/>
    <property type="project" value="UniProtKB-SubCell"/>
</dbReference>
<dbReference type="GO" id="GO:0044781">
    <property type="term" value="P:bacterial-type flagellum organization"/>
    <property type="evidence" value="ECO:0007669"/>
    <property type="project" value="UniProtKB-KW"/>
</dbReference>
<dbReference type="GO" id="GO:0006935">
    <property type="term" value="P:chemotaxis"/>
    <property type="evidence" value="ECO:0007669"/>
    <property type="project" value="UniProtKB-KW"/>
</dbReference>
<dbReference type="GO" id="GO:0015031">
    <property type="term" value="P:protein transport"/>
    <property type="evidence" value="ECO:0007669"/>
    <property type="project" value="UniProtKB-KW"/>
</dbReference>
<dbReference type="Gene3D" id="1.10.287.1700">
    <property type="match status" value="1"/>
</dbReference>
<dbReference type="InterPro" id="IPR053716">
    <property type="entry name" value="Flag_assembly_chemotaxis_eff"/>
</dbReference>
<feature type="chain" id="PRO_0000378288" description="Flagellar FliJ protein">
    <location>
        <begin position="1"/>
        <end position="139"/>
    </location>
</feature>
<reference key="1">
    <citation type="journal article" date="1997" name="J. Bacteriol.">
        <title>Identification of the fliI and fliJ components of the Caulobacter flagellar type III protein secretion system.</title>
        <authorList>
            <person name="Stephens C."/>
            <person name="Mohr C."/>
            <person name="Boyd C."/>
            <person name="Maddock J."/>
            <person name="Gober J."/>
            <person name="Shapiro L."/>
        </authorList>
    </citation>
    <scope>NUCLEOTIDE SEQUENCE [GENOMIC DNA]</scope>
</reference>
<reference key="2">
    <citation type="journal article" date="2010" name="J. Bacteriol.">
        <title>The genetic basis of laboratory adaptation in Caulobacter crescentus.</title>
        <authorList>
            <person name="Marks M.E."/>
            <person name="Castro-Rojas C.M."/>
            <person name="Teiling C."/>
            <person name="Du L."/>
            <person name="Kapatral V."/>
            <person name="Walunas T.L."/>
            <person name="Crosson S."/>
        </authorList>
    </citation>
    <scope>NUCLEOTIDE SEQUENCE [LARGE SCALE GENOMIC DNA]</scope>
    <source>
        <strain>NA1000 / CB15N</strain>
    </source>
</reference>
<protein>
    <recommendedName>
        <fullName>Flagellar FliJ protein</fullName>
    </recommendedName>
</protein>
<evidence type="ECO:0000250" key="1"/>
<evidence type="ECO:0000305" key="2"/>
<proteinExistence type="inferred from homology"/>
<organism>
    <name type="scientific">Caulobacter vibrioides (strain NA1000 / CB15N)</name>
    <name type="common">Caulobacter crescentus</name>
    <dbReference type="NCBI Taxonomy" id="565050"/>
    <lineage>
        <taxon>Bacteria</taxon>
        <taxon>Pseudomonadati</taxon>
        <taxon>Pseudomonadota</taxon>
        <taxon>Alphaproteobacteria</taxon>
        <taxon>Caulobacterales</taxon>
        <taxon>Caulobacteraceae</taxon>
        <taxon>Caulobacter</taxon>
    </lineage>
</organism>
<keyword id="KW-1005">Bacterial flagellum biogenesis</keyword>
<keyword id="KW-1006">Bacterial flagellum protein export</keyword>
<keyword id="KW-1003">Cell membrane</keyword>
<keyword id="KW-0145">Chemotaxis</keyword>
<keyword id="KW-0472">Membrane</keyword>
<keyword id="KW-0653">Protein transport</keyword>
<keyword id="KW-1185">Reference proteome</keyword>
<keyword id="KW-0813">Transport</keyword>
<accession>B8H364</accession>
<accession>O05529</accession>
<sequence>MTKWAASLIRISNHEVETLQKRLAEITERRMAAEMRVTLLDAEAEAEAKNAEGDPSAGWYMIGYREGSKRRRADMLVQIEQCQQEEAGARDALSEAFENLKKYEHVAEQAKILAAKKMNAFEAAQMDELSIRRAAVGGR</sequence>
<gene>
    <name type="primary">fliJ</name>
    <name type="ordered locus">CCNA_03136</name>
</gene>